<sequence>MLKKIITALGMSGMLLASSNAIAEDTKTKNDNLSPQSVDLSPLRNLNKLDSPMDKDYNYHQAFKKLDTEQLKKDMQDLLTQSQDWWPADFGNYGPFFIRLSWHDAGTYRIYDGRGGANRGQQRFSPLNSWPDNVNLDKARQLLWPIKQKYGDAVSWSDLIVLAGTVSLESMGMKPIGFAFGREDDWQGDDTNWGLSPEEIMSSNVRDGKLAPAYAATQMGLIYVNPEGPDGKPDIKGAASEIRQAFRAMGMTDKETVALIAGGHTFGKTHGAVPEDKVKQAIGPAPDKAPIEQQGLGWHNSYGTGNGDDTMGSGLEGSWTSTPTFWNHDFLHNLYNLDWKKTLSPAGAHQWTPTNAKPENMVPDAHKLGVKHKPIMFTTDLALKEDDGFNKYTQEFYNNPEEFKEEFAKAWFKLTHRDMGPKSRYIGPWIPEQNFIWQDPVPAADYKQVSTQDIAQLEQDIINSGLTNQQLIKTAWDSASTYRKTDYRGGSNGARIALAPEKDWQMNEPAKLEVVLTKLKEIQTNFNNSKTDGTKVSLADLIVLGGNVGVEQAAKQAGYNIQMPFVPGRTDATQAQTDIESFNYLKTKSDGFINYTDGSISADKLPQTLVEKASMLDLNIPEMTVLVGGMRALDVNYDNSQEGVLTTTPGQLNNSFFVNLLDMSTQWKKSDKKDGEYIGIDRKTGKQKWTASPVDLIFGSNSELKAVAQVYAENGNEQKFVNDFAKAWHKVMMLGRFDVQQ</sequence>
<reference key="1">
    <citation type="journal article" date="2006" name="J. Bacteriol.">
        <title>Chromosome rearrangement and diversification of Francisella tularensis revealed by the type B (OSU18) genome sequence.</title>
        <authorList>
            <person name="Petrosino J.F."/>
            <person name="Xiang Q."/>
            <person name="Karpathy S.E."/>
            <person name="Jiang H."/>
            <person name="Yerrapragada S."/>
            <person name="Liu Y."/>
            <person name="Gioia J."/>
            <person name="Hemphill L."/>
            <person name="Gonzalez A."/>
            <person name="Raghavan T.M."/>
            <person name="Uzman A."/>
            <person name="Fox G.E."/>
            <person name="Highlander S."/>
            <person name="Reichard M."/>
            <person name="Morton R.J."/>
            <person name="Clinkenbeard K.D."/>
            <person name="Weinstock G.M."/>
        </authorList>
    </citation>
    <scope>NUCLEOTIDE SEQUENCE [LARGE SCALE GENOMIC DNA]</scope>
    <source>
        <strain>OSU18</strain>
    </source>
</reference>
<accession>Q0BKW5</accession>
<name>KATG_FRATO</name>
<keyword id="KW-0349">Heme</keyword>
<keyword id="KW-0376">Hydrogen peroxide</keyword>
<keyword id="KW-0408">Iron</keyword>
<keyword id="KW-0479">Metal-binding</keyword>
<keyword id="KW-0560">Oxidoreductase</keyword>
<keyword id="KW-0575">Peroxidase</keyword>
<keyword id="KW-0732">Signal</keyword>
<dbReference type="EC" id="1.11.1.21" evidence="1"/>
<dbReference type="EMBL" id="CP000437">
    <property type="protein sequence ID" value="ABI83269.1"/>
    <property type="molecule type" value="Genomic_DNA"/>
</dbReference>
<dbReference type="RefSeq" id="WP_003016823.1">
    <property type="nucleotide sequence ID" value="NC_017463.1"/>
</dbReference>
<dbReference type="SMR" id="Q0BKW5"/>
<dbReference type="KEGG" id="fth:FTH_1458"/>
<dbReference type="GO" id="GO:0005829">
    <property type="term" value="C:cytosol"/>
    <property type="evidence" value="ECO:0007669"/>
    <property type="project" value="TreeGrafter"/>
</dbReference>
<dbReference type="GO" id="GO:0004096">
    <property type="term" value="F:catalase activity"/>
    <property type="evidence" value="ECO:0007669"/>
    <property type="project" value="UniProtKB-UniRule"/>
</dbReference>
<dbReference type="GO" id="GO:0020037">
    <property type="term" value="F:heme binding"/>
    <property type="evidence" value="ECO:0007669"/>
    <property type="project" value="InterPro"/>
</dbReference>
<dbReference type="GO" id="GO:0046872">
    <property type="term" value="F:metal ion binding"/>
    <property type="evidence" value="ECO:0007669"/>
    <property type="project" value="UniProtKB-KW"/>
</dbReference>
<dbReference type="GO" id="GO:0070301">
    <property type="term" value="P:cellular response to hydrogen peroxide"/>
    <property type="evidence" value="ECO:0007669"/>
    <property type="project" value="TreeGrafter"/>
</dbReference>
<dbReference type="GO" id="GO:0042744">
    <property type="term" value="P:hydrogen peroxide catabolic process"/>
    <property type="evidence" value="ECO:0007669"/>
    <property type="project" value="UniProtKB-KW"/>
</dbReference>
<dbReference type="CDD" id="cd00649">
    <property type="entry name" value="catalase_peroxidase_1"/>
    <property type="match status" value="1"/>
</dbReference>
<dbReference type="CDD" id="cd08200">
    <property type="entry name" value="catalase_peroxidase_2"/>
    <property type="match status" value="1"/>
</dbReference>
<dbReference type="Gene3D" id="1.10.520.10">
    <property type="match status" value="2"/>
</dbReference>
<dbReference type="Gene3D" id="1.10.420.10">
    <property type="entry name" value="Peroxidase, domain 2"/>
    <property type="match status" value="2"/>
</dbReference>
<dbReference type="HAMAP" id="MF_01961">
    <property type="entry name" value="Catal_peroxid"/>
    <property type="match status" value="1"/>
</dbReference>
<dbReference type="InterPro" id="IPR000763">
    <property type="entry name" value="Catalase_peroxidase"/>
</dbReference>
<dbReference type="InterPro" id="IPR002016">
    <property type="entry name" value="Haem_peroxidase"/>
</dbReference>
<dbReference type="InterPro" id="IPR010255">
    <property type="entry name" value="Haem_peroxidase_sf"/>
</dbReference>
<dbReference type="InterPro" id="IPR019794">
    <property type="entry name" value="Peroxidases_AS"/>
</dbReference>
<dbReference type="InterPro" id="IPR019793">
    <property type="entry name" value="Peroxidases_heam-ligand_BS"/>
</dbReference>
<dbReference type="NCBIfam" id="TIGR00198">
    <property type="entry name" value="cat_per_HPI"/>
    <property type="match status" value="1"/>
</dbReference>
<dbReference type="NCBIfam" id="NF011635">
    <property type="entry name" value="PRK15061.1"/>
    <property type="match status" value="1"/>
</dbReference>
<dbReference type="PANTHER" id="PTHR30555:SF0">
    <property type="entry name" value="CATALASE-PEROXIDASE"/>
    <property type="match status" value="1"/>
</dbReference>
<dbReference type="PANTHER" id="PTHR30555">
    <property type="entry name" value="HYDROPEROXIDASE I, BIFUNCTIONAL CATALASE-PEROXIDASE"/>
    <property type="match status" value="1"/>
</dbReference>
<dbReference type="Pfam" id="PF00141">
    <property type="entry name" value="peroxidase"/>
    <property type="match status" value="2"/>
</dbReference>
<dbReference type="PRINTS" id="PR00460">
    <property type="entry name" value="BPEROXIDASE"/>
</dbReference>
<dbReference type="PRINTS" id="PR00458">
    <property type="entry name" value="PEROXIDASE"/>
</dbReference>
<dbReference type="SUPFAM" id="SSF48113">
    <property type="entry name" value="Heme-dependent peroxidases"/>
    <property type="match status" value="2"/>
</dbReference>
<dbReference type="PROSITE" id="PS00435">
    <property type="entry name" value="PEROXIDASE_1"/>
    <property type="match status" value="1"/>
</dbReference>
<dbReference type="PROSITE" id="PS00436">
    <property type="entry name" value="PEROXIDASE_2"/>
    <property type="match status" value="1"/>
</dbReference>
<dbReference type="PROSITE" id="PS50873">
    <property type="entry name" value="PEROXIDASE_4"/>
    <property type="match status" value="1"/>
</dbReference>
<comment type="function">
    <text evidence="1">Bifunctional enzyme with both catalase and broad-spectrum peroxidase activity.</text>
</comment>
<comment type="catalytic activity">
    <reaction evidence="1">
        <text>H2O2 + AH2 = A + 2 H2O</text>
        <dbReference type="Rhea" id="RHEA:30275"/>
        <dbReference type="ChEBI" id="CHEBI:13193"/>
        <dbReference type="ChEBI" id="CHEBI:15377"/>
        <dbReference type="ChEBI" id="CHEBI:16240"/>
        <dbReference type="ChEBI" id="CHEBI:17499"/>
        <dbReference type="EC" id="1.11.1.21"/>
    </reaction>
</comment>
<comment type="catalytic activity">
    <reaction evidence="1">
        <text>2 H2O2 = O2 + 2 H2O</text>
        <dbReference type="Rhea" id="RHEA:20309"/>
        <dbReference type="ChEBI" id="CHEBI:15377"/>
        <dbReference type="ChEBI" id="CHEBI:15379"/>
        <dbReference type="ChEBI" id="CHEBI:16240"/>
        <dbReference type="EC" id="1.11.1.21"/>
    </reaction>
</comment>
<comment type="cofactor">
    <cofactor evidence="1">
        <name>heme b</name>
        <dbReference type="ChEBI" id="CHEBI:60344"/>
    </cofactor>
    <text evidence="1">Binds 1 heme b (iron(II)-protoporphyrin IX) group per dimer.</text>
</comment>
<comment type="subunit">
    <text evidence="1">Homodimer or homotetramer.</text>
</comment>
<comment type="PTM">
    <text evidence="1">Formation of the three residue Trp-Tyr-Met cross-link is important for the catalase, but not the peroxidase activity of the enzyme.</text>
</comment>
<comment type="similarity">
    <text evidence="1">Belongs to the peroxidase family. Peroxidase/catalase subfamily.</text>
</comment>
<evidence type="ECO:0000255" key="1">
    <source>
        <dbReference type="HAMAP-Rule" id="MF_01961"/>
    </source>
</evidence>
<protein>
    <recommendedName>
        <fullName evidence="1">Catalase-peroxidase</fullName>
        <shortName evidence="1">CP</shortName>
        <ecNumber evidence="1">1.11.1.21</ecNumber>
    </recommendedName>
    <alternativeName>
        <fullName evidence="1">Peroxidase/catalase</fullName>
    </alternativeName>
</protein>
<proteinExistence type="inferred from homology"/>
<organism>
    <name type="scientific">Francisella tularensis subsp. holarctica (strain OSU18)</name>
    <dbReference type="NCBI Taxonomy" id="393011"/>
    <lineage>
        <taxon>Bacteria</taxon>
        <taxon>Pseudomonadati</taxon>
        <taxon>Pseudomonadota</taxon>
        <taxon>Gammaproteobacteria</taxon>
        <taxon>Thiotrichales</taxon>
        <taxon>Francisellaceae</taxon>
        <taxon>Francisella</taxon>
    </lineage>
</organism>
<feature type="signal peptide" evidence="1">
    <location>
        <begin position="1"/>
        <end position="23"/>
    </location>
</feature>
<feature type="chain" id="PRO_0000354791" description="Catalase-peroxidase">
    <location>
        <begin position="24"/>
        <end position="741"/>
    </location>
</feature>
<feature type="active site" description="Proton acceptor" evidence="1">
    <location>
        <position position="103"/>
    </location>
</feature>
<feature type="binding site" description="axial binding residue" evidence="1">
    <location>
        <position position="264"/>
    </location>
    <ligand>
        <name>heme b</name>
        <dbReference type="ChEBI" id="CHEBI:60344"/>
    </ligand>
    <ligandPart>
        <name>Fe</name>
        <dbReference type="ChEBI" id="CHEBI:18248"/>
    </ligandPart>
</feature>
<feature type="site" description="Transition state stabilizer" evidence="1">
    <location>
        <position position="99"/>
    </location>
</feature>
<feature type="cross-link" description="Tryptophyl-tyrosyl-methioninium (Trp-Tyr) (with M-249)" evidence="1">
    <location>
        <begin position="102"/>
        <end position="223"/>
    </location>
</feature>
<feature type="cross-link" description="Tryptophyl-tyrosyl-methioninium (Tyr-Met) (with W-102)" evidence="1">
    <location>
        <begin position="223"/>
        <end position="249"/>
    </location>
</feature>
<gene>
    <name evidence="1" type="primary">katG</name>
    <name type="ordered locus">FTH_1458</name>
</gene>